<gene>
    <name type="primary">RALYL</name>
</gene>
<feature type="chain" id="PRO_0000299524" description="RNA-binding Raly-like protein">
    <location>
        <begin position="1"/>
        <end position="293"/>
    </location>
</feature>
<feature type="domain" description="RRM" evidence="2">
    <location>
        <begin position="21"/>
        <end position="92"/>
    </location>
</feature>
<feature type="region of interest" description="Disordered" evidence="3">
    <location>
        <begin position="159"/>
        <end position="195"/>
    </location>
</feature>
<feature type="region of interest" description="Disordered" evidence="3">
    <location>
        <begin position="245"/>
        <end position="293"/>
    </location>
</feature>
<feature type="coiled-coil region" evidence="1">
    <location>
        <begin position="192"/>
        <end position="254"/>
    </location>
</feature>
<feature type="compositionally biased region" description="Low complexity" evidence="3">
    <location>
        <begin position="176"/>
        <end position="192"/>
    </location>
</feature>
<feature type="compositionally biased region" description="Acidic residues" evidence="3">
    <location>
        <begin position="259"/>
        <end position="284"/>
    </location>
</feature>
<organism>
    <name type="scientific">Bos taurus</name>
    <name type="common">Bovine</name>
    <dbReference type="NCBI Taxonomy" id="9913"/>
    <lineage>
        <taxon>Eukaryota</taxon>
        <taxon>Metazoa</taxon>
        <taxon>Chordata</taxon>
        <taxon>Craniata</taxon>
        <taxon>Vertebrata</taxon>
        <taxon>Euteleostomi</taxon>
        <taxon>Mammalia</taxon>
        <taxon>Eutheria</taxon>
        <taxon>Laurasiatheria</taxon>
        <taxon>Artiodactyla</taxon>
        <taxon>Ruminantia</taxon>
        <taxon>Pecora</taxon>
        <taxon>Bovidae</taxon>
        <taxon>Bovinae</taxon>
        <taxon>Bos</taxon>
    </lineage>
</organism>
<reference key="1">
    <citation type="submission" date="2006-09" db="EMBL/GenBank/DDBJ databases">
        <authorList>
            <consortium name="NIH - Mammalian Gene Collection (MGC) project"/>
        </authorList>
    </citation>
    <scope>NUCLEOTIDE SEQUENCE [LARGE SCALE MRNA]</scope>
    <source>
        <strain>Hereford</strain>
        <tissue>Brain cortex</tissue>
    </source>
</reference>
<accession>Q08DJ0</accession>
<sequence length="293" mass="32400">MTGKTQTSNVTNKNDPKSINSRVFIGNLNTAIVKKVDIEAIFSKYGKIVGCSVHKGYAFVQYMSERHARAAVAGENARIIAGQPLDINMAGEPKPYRPKPGNKRPISALYRLESKEPFLSVGGYVFDYDYYRDDFYNRLFDYHGRVPPPPRAVIPLKRPRAAVTTTRRGKGVFSMKGGSRSAVSGSSSSGSKLKSDELQTIKKELTQIKTKIDSLLGRLEKIEKQQKAEAEAQKKQLEASLELIQDECVSENADHSAEEPAEGAPDADGEELTDGVEEDFDEDGAHELFLQIK</sequence>
<name>RALYL_BOVIN</name>
<proteinExistence type="evidence at transcript level"/>
<dbReference type="EMBL" id="BC123721">
    <property type="protein sequence ID" value="AAI23722.1"/>
    <property type="molecule type" value="mRNA"/>
</dbReference>
<dbReference type="RefSeq" id="NP_001071400.1">
    <property type="nucleotide sequence ID" value="NM_001077932.1"/>
</dbReference>
<dbReference type="SMR" id="Q08DJ0"/>
<dbReference type="FunCoup" id="Q08DJ0">
    <property type="interactions" value="584"/>
</dbReference>
<dbReference type="STRING" id="9913.ENSBTAP00000023563"/>
<dbReference type="PaxDb" id="9913-ENSBTAP00000023563"/>
<dbReference type="GeneID" id="516989"/>
<dbReference type="KEGG" id="bta:516989"/>
<dbReference type="CTD" id="138046"/>
<dbReference type="eggNOG" id="KOG0118">
    <property type="taxonomic scope" value="Eukaryota"/>
</dbReference>
<dbReference type="InParanoid" id="Q08DJ0"/>
<dbReference type="OrthoDB" id="6730379at2759"/>
<dbReference type="Proteomes" id="UP000009136">
    <property type="component" value="Unplaced"/>
</dbReference>
<dbReference type="GO" id="GO:0005634">
    <property type="term" value="C:nucleus"/>
    <property type="evidence" value="ECO:0000318"/>
    <property type="project" value="GO_Central"/>
</dbReference>
<dbReference type="GO" id="GO:0003723">
    <property type="term" value="F:RNA binding"/>
    <property type="evidence" value="ECO:0000318"/>
    <property type="project" value="GO_Central"/>
</dbReference>
<dbReference type="FunFam" id="3.30.70.330:FF:000019">
    <property type="entry name" value="heterogeneous nuclear ribonucleoproteins C1/C2 isoform X1"/>
    <property type="match status" value="1"/>
</dbReference>
<dbReference type="Gene3D" id="3.30.70.330">
    <property type="match status" value="1"/>
</dbReference>
<dbReference type="InterPro" id="IPR017347">
    <property type="entry name" value="hnRNP_C"/>
</dbReference>
<dbReference type="InterPro" id="IPR012677">
    <property type="entry name" value="Nucleotide-bd_a/b_plait_sf"/>
</dbReference>
<dbReference type="InterPro" id="IPR035979">
    <property type="entry name" value="RBD_domain_sf"/>
</dbReference>
<dbReference type="InterPro" id="IPR000504">
    <property type="entry name" value="RRM_dom"/>
</dbReference>
<dbReference type="InterPro" id="IPR051186">
    <property type="entry name" value="RRM_HNRPC/RALY_subfam"/>
</dbReference>
<dbReference type="PANTHER" id="PTHR13968">
    <property type="entry name" value="HETEROGENEOUS NUCLEAR RIBONUCLEOPROTEIN"/>
    <property type="match status" value="1"/>
</dbReference>
<dbReference type="PANTHER" id="PTHR13968:SF21">
    <property type="entry name" value="RNA-BINDING RALY-LIKE PROTEIN"/>
    <property type="match status" value="1"/>
</dbReference>
<dbReference type="Pfam" id="PF00076">
    <property type="entry name" value="RRM_1"/>
    <property type="match status" value="1"/>
</dbReference>
<dbReference type="PIRSF" id="PIRSF037992">
    <property type="entry name" value="hnRNP-C_Raly"/>
    <property type="match status" value="1"/>
</dbReference>
<dbReference type="SMART" id="SM00360">
    <property type="entry name" value="RRM"/>
    <property type="match status" value="1"/>
</dbReference>
<dbReference type="SUPFAM" id="SSF54928">
    <property type="entry name" value="RNA-binding domain, RBD"/>
    <property type="match status" value="1"/>
</dbReference>
<dbReference type="PROSITE" id="PS50102">
    <property type="entry name" value="RRM"/>
    <property type="match status" value="1"/>
</dbReference>
<evidence type="ECO:0000255" key="1"/>
<evidence type="ECO:0000255" key="2">
    <source>
        <dbReference type="PROSITE-ProRule" id="PRU00176"/>
    </source>
</evidence>
<evidence type="ECO:0000256" key="3">
    <source>
        <dbReference type="SAM" id="MobiDB-lite"/>
    </source>
</evidence>
<evidence type="ECO:0000305" key="4"/>
<keyword id="KW-0175">Coiled coil</keyword>
<keyword id="KW-1185">Reference proteome</keyword>
<keyword id="KW-0694">RNA-binding</keyword>
<comment type="similarity">
    <text evidence="4">Belongs to the RRM HNRPC family. RALY subfamily.</text>
</comment>
<protein>
    <recommendedName>
        <fullName>RNA-binding Raly-like protein</fullName>
    </recommendedName>
</protein>